<organism>
    <name type="scientific">Yersinia pestis bv. Antiqua (strain Nepal516)</name>
    <dbReference type="NCBI Taxonomy" id="377628"/>
    <lineage>
        <taxon>Bacteria</taxon>
        <taxon>Pseudomonadati</taxon>
        <taxon>Pseudomonadota</taxon>
        <taxon>Gammaproteobacteria</taxon>
        <taxon>Enterobacterales</taxon>
        <taxon>Yersiniaceae</taxon>
        <taxon>Yersinia</taxon>
    </lineage>
</organism>
<keyword id="KW-0687">Ribonucleoprotein</keyword>
<keyword id="KW-0689">Ribosomal protein</keyword>
<keyword id="KW-0694">RNA-binding</keyword>
<keyword id="KW-0699">rRNA-binding</keyword>
<accession>Q1CEH3</accession>
<accession>C4GXY9</accession>
<name>RL9_YERPN</name>
<gene>
    <name evidence="1" type="primary">rplI</name>
    <name type="ordered locus">YPN_3280</name>
    <name type="ORF">YP516_3725</name>
</gene>
<sequence>MQVILLDKVANLGSLGDQVNVKAGYARNFLVPQGKAVPATKKNVEFFEARRAELEAKLADVLAAAEARATKINELVSVTISSKAGDEGKLFGSIGTRDIADAVTAAGVEVAKSEVRLPNGVLRTAGEHEVHFQVHSDVFAKLNVVVVPEA</sequence>
<evidence type="ECO:0000255" key="1">
    <source>
        <dbReference type="HAMAP-Rule" id="MF_00503"/>
    </source>
</evidence>
<evidence type="ECO:0000305" key="2"/>
<feature type="chain" id="PRO_0000258497" description="Large ribosomal subunit protein bL9">
    <location>
        <begin position="1"/>
        <end position="150"/>
    </location>
</feature>
<protein>
    <recommendedName>
        <fullName evidence="1">Large ribosomal subunit protein bL9</fullName>
    </recommendedName>
    <alternativeName>
        <fullName evidence="2">50S ribosomal protein L9</fullName>
    </alternativeName>
</protein>
<comment type="function">
    <text evidence="1">Binds to the 23S rRNA.</text>
</comment>
<comment type="similarity">
    <text evidence="1">Belongs to the bacterial ribosomal protein bL9 family.</text>
</comment>
<reference key="1">
    <citation type="journal article" date="2006" name="J. Bacteriol.">
        <title>Complete genome sequence of Yersinia pestis strains Antiqua and Nepal516: evidence of gene reduction in an emerging pathogen.</title>
        <authorList>
            <person name="Chain P.S.G."/>
            <person name="Hu P."/>
            <person name="Malfatti S.A."/>
            <person name="Radnedge L."/>
            <person name="Larimer F."/>
            <person name="Vergez L.M."/>
            <person name="Worsham P."/>
            <person name="Chu M.C."/>
            <person name="Andersen G.L."/>
        </authorList>
    </citation>
    <scope>NUCLEOTIDE SEQUENCE [LARGE SCALE GENOMIC DNA]</scope>
    <source>
        <strain>Nepal516</strain>
    </source>
</reference>
<reference key="2">
    <citation type="submission" date="2009-04" db="EMBL/GenBank/DDBJ databases">
        <title>Yersinia pestis Nepal516A whole genome shotgun sequencing project.</title>
        <authorList>
            <person name="Plunkett G. III"/>
            <person name="Anderson B.D."/>
            <person name="Baumler D.J."/>
            <person name="Burland V."/>
            <person name="Cabot E.L."/>
            <person name="Glasner J.D."/>
            <person name="Mau B."/>
            <person name="Neeno-Eckwall E."/>
            <person name="Perna N.T."/>
            <person name="Munk A.C."/>
            <person name="Tapia R."/>
            <person name="Green L.D."/>
            <person name="Rogers Y.C."/>
            <person name="Detter J.C."/>
            <person name="Bruce D.C."/>
            <person name="Brettin T.S."/>
        </authorList>
    </citation>
    <scope>NUCLEOTIDE SEQUENCE [LARGE SCALE GENOMIC DNA]</scope>
    <source>
        <strain>Nepal516</strain>
    </source>
</reference>
<dbReference type="EMBL" id="CP000305">
    <property type="protein sequence ID" value="ABG19607.1"/>
    <property type="molecule type" value="Genomic_DNA"/>
</dbReference>
<dbReference type="EMBL" id="ACNQ01000017">
    <property type="protein sequence ID" value="EEO75789.1"/>
    <property type="molecule type" value="Genomic_DNA"/>
</dbReference>
<dbReference type="RefSeq" id="WP_002210156.1">
    <property type="nucleotide sequence ID" value="NZ_ACNQ01000017.1"/>
</dbReference>
<dbReference type="SMR" id="Q1CEH3"/>
<dbReference type="GeneID" id="57975178"/>
<dbReference type="KEGG" id="ypn:YPN_3280"/>
<dbReference type="HOGENOM" id="CLU_078938_4_1_6"/>
<dbReference type="Proteomes" id="UP000008936">
    <property type="component" value="Chromosome"/>
</dbReference>
<dbReference type="GO" id="GO:1990904">
    <property type="term" value="C:ribonucleoprotein complex"/>
    <property type="evidence" value="ECO:0007669"/>
    <property type="project" value="UniProtKB-KW"/>
</dbReference>
<dbReference type="GO" id="GO:0005840">
    <property type="term" value="C:ribosome"/>
    <property type="evidence" value="ECO:0007669"/>
    <property type="project" value="UniProtKB-KW"/>
</dbReference>
<dbReference type="GO" id="GO:0019843">
    <property type="term" value="F:rRNA binding"/>
    <property type="evidence" value="ECO:0007669"/>
    <property type="project" value="UniProtKB-UniRule"/>
</dbReference>
<dbReference type="GO" id="GO:0003735">
    <property type="term" value="F:structural constituent of ribosome"/>
    <property type="evidence" value="ECO:0007669"/>
    <property type="project" value="InterPro"/>
</dbReference>
<dbReference type="GO" id="GO:0006412">
    <property type="term" value="P:translation"/>
    <property type="evidence" value="ECO:0007669"/>
    <property type="project" value="UniProtKB-UniRule"/>
</dbReference>
<dbReference type="FunFam" id="3.10.430.100:FF:000001">
    <property type="entry name" value="50S ribosomal protein L9"/>
    <property type="match status" value="1"/>
</dbReference>
<dbReference type="FunFam" id="3.40.5.10:FF:000001">
    <property type="entry name" value="50S ribosomal protein L9"/>
    <property type="match status" value="1"/>
</dbReference>
<dbReference type="Gene3D" id="3.10.430.100">
    <property type="entry name" value="Ribosomal protein L9, C-terminal domain"/>
    <property type="match status" value="1"/>
</dbReference>
<dbReference type="Gene3D" id="3.40.5.10">
    <property type="entry name" value="Ribosomal protein L9, N-terminal domain"/>
    <property type="match status" value="1"/>
</dbReference>
<dbReference type="HAMAP" id="MF_00503">
    <property type="entry name" value="Ribosomal_bL9"/>
    <property type="match status" value="1"/>
</dbReference>
<dbReference type="InterPro" id="IPR000244">
    <property type="entry name" value="Ribosomal_bL9"/>
</dbReference>
<dbReference type="InterPro" id="IPR009027">
    <property type="entry name" value="Ribosomal_bL9/RNase_H1_N"/>
</dbReference>
<dbReference type="InterPro" id="IPR020594">
    <property type="entry name" value="Ribosomal_bL9_bac/chp"/>
</dbReference>
<dbReference type="InterPro" id="IPR020069">
    <property type="entry name" value="Ribosomal_bL9_C"/>
</dbReference>
<dbReference type="InterPro" id="IPR036791">
    <property type="entry name" value="Ribosomal_bL9_C_sf"/>
</dbReference>
<dbReference type="InterPro" id="IPR020070">
    <property type="entry name" value="Ribosomal_bL9_N"/>
</dbReference>
<dbReference type="InterPro" id="IPR036935">
    <property type="entry name" value="Ribosomal_bL9_N_sf"/>
</dbReference>
<dbReference type="NCBIfam" id="TIGR00158">
    <property type="entry name" value="L9"/>
    <property type="match status" value="1"/>
</dbReference>
<dbReference type="PANTHER" id="PTHR21368">
    <property type="entry name" value="50S RIBOSOMAL PROTEIN L9"/>
    <property type="match status" value="1"/>
</dbReference>
<dbReference type="Pfam" id="PF03948">
    <property type="entry name" value="Ribosomal_L9_C"/>
    <property type="match status" value="1"/>
</dbReference>
<dbReference type="Pfam" id="PF01281">
    <property type="entry name" value="Ribosomal_L9_N"/>
    <property type="match status" value="1"/>
</dbReference>
<dbReference type="SUPFAM" id="SSF55658">
    <property type="entry name" value="L9 N-domain-like"/>
    <property type="match status" value="1"/>
</dbReference>
<dbReference type="SUPFAM" id="SSF55653">
    <property type="entry name" value="Ribosomal protein L9 C-domain"/>
    <property type="match status" value="1"/>
</dbReference>
<dbReference type="PROSITE" id="PS00651">
    <property type="entry name" value="RIBOSOMAL_L9"/>
    <property type="match status" value="1"/>
</dbReference>
<proteinExistence type="inferred from homology"/>